<protein>
    <recommendedName>
        <fullName evidence="1">Phospho-N-acetylmuramoyl-pentapeptide-transferase</fullName>
        <ecNumber evidence="1">2.7.8.13</ecNumber>
    </recommendedName>
    <alternativeName>
        <fullName evidence="1">UDP-MurNAc-pentapeptide phosphotransferase</fullName>
    </alternativeName>
</protein>
<name>MRAY_SYNPW</name>
<reference key="1">
    <citation type="submission" date="2006-05" db="EMBL/GenBank/DDBJ databases">
        <authorList>
            <consortium name="Genoscope"/>
        </authorList>
    </citation>
    <scope>NUCLEOTIDE SEQUENCE [LARGE SCALE GENOMIC DNA]</scope>
    <source>
        <strain>WH7803</strain>
    </source>
</reference>
<sequence length="365" mass="38454">MSDASDQTSRLDGRWPAAILIGAVISAAFVADRLIPNSLLSLPLMAAILVSTLITWWGVPRLRALKMGQVIRTEGPQGHLSKSGTPTMGGLLVVPVGVIIGGLVSSEGRSAQQLLAIALVTLAYMVIGGVDDWSSLTKRTNTGLTPRGKLLLQATAAVLFLGWAGWQGWIAGTVSLPFNLDLPLHWLIWPLALFVFLAESNATNLTDGLDGLASGCGALVFTGLALQLMLRGNAGDPALAGFCMAMAGCWLGFLIHNRNPAKVFMGDTGSLAMGAALSAVALLSDSLWPLLLMGGVFLAESVSVIVQVWVFKATKGADGQGRRVFRMAPLHHHFELGGTPEQVVVPLFWLVTAGLVMLGLGLHPR</sequence>
<accession>A5GPT3</accession>
<comment type="function">
    <text evidence="1">Catalyzes the initial step of the lipid cycle reactions in the biosynthesis of the cell wall peptidoglycan: transfers peptidoglycan precursor phospho-MurNAc-pentapeptide from UDP-MurNAc-pentapeptide onto the lipid carrier undecaprenyl phosphate, yielding undecaprenyl-pyrophosphoryl-MurNAc-pentapeptide, known as lipid I.</text>
</comment>
<comment type="catalytic activity">
    <reaction evidence="1">
        <text>UDP-N-acetyl-alpha-D-muramoyl-L-alanyl-gamma-D-glutamyl-meso-2,6-diaminopimeloyl-D-alanyl-D-alanine + di-trans,octa-cis-undecaprenyl phosphate = di-trans,octa-cis-undecaprenyl diphospho-N-acetyl-alpha-D-muramoyl-L-alanyl-D-glutamyl-meso-2,6-diaminopimeloyl-D-alanyl-D-alanine + UMP</text>
        <dbReference type="Rhea" id="RHEA:28386"/>
        <dbReference type="ChEBI" id="CHEBI:57865"/>
        <dbReference type="ChEBI" id="CHEBI:60392"/>
        <dbReference type="ChEBI" id="CHEBI:61386"/>
        <dbReference type="ChEBI" id="CHEBI:61387"/>
        <dbReference type="EC" id="2.7.8.13"/>
    </reaction>
</comment>
<comment type="cofactor">
    <cofactor evidence="1">
        <name>Mg(2+)</name>
        <dbReference type="ChEBI" id="CHEBI:18420"/>
    </cofactor>
</comment>
<comment type="pathway">
    <text evidence="1">Cell wall biogenesis; peptidoglycan biosynthesis.</text>
</comment>
<comment type="subcellular location">
    <subcellularLocation>
        <location evidence="1">Cell inner membrane</location>
        <topology evidence="1">Multi-pass membrane protein</topology>
    </subcellularLocation>
</comment>
<comment type="similarity">
    <text evidence="1">Belongs to the glycosyltransferase 4 family. MraY subfamily.</text>
</comment>
<organism>
    <name type="scientific">Synechococcus sp. (strain WH7803)</name>
    <dbReference type="NCBI Taxonomy" id="32051"/>
    <lineage>
        <taxon>Bacteria</taxon>
        <taxon>Bacillati</taxon>
        <taxon>Cyanobacteriota</taxon>
        <taxon>Cyanophyceae</taxon>
        <taxon>Synechococcales</taxon>
        <taxon>Synechococcaceae</taxon>
        <taxon>Synechococcus</taxon>
    </lineage>
</organism>
<gene>
    <name evidence="1" type="primary">mraY</name>
    <name type="ordered locus">SynWH7803_2522</name>
</gene>
<proteinExistence type="inferred from homology"/>
<keyword id="KW-0131">Cell cycle</keyword>
<keyword id="KW-0132">Cell division</keyword>
<keyword id="KW-0997">Cell inner membrane</keyword>
<keyword id="KW-1003">Cell membrane</keyword>
<keyword id="KW-0133">Cell shape</keyword>
<keyword id="KW-0961">Cell wall biogenesis/degradation</keyword>
<keyword id="KW-0460">Magnesium</keyword>
<keyword id="KW-0472">Membrane</keyword>
<keyword id="KW-0479">Metal-binding</keyword>
<keyword id="KW-0573">Peptidoglycan synthesis</keyword>
<keyword id="KW-1185">Reference proteome</keyword>
<keyword id="KW-0808">Transferase</keyword>
<keyword id="KW-0812">Transmembrane</keyword>
<keyword id="KW-1133">Transmembrane helix</keyword>
<evidence type="ECO:0000255" key="1">
    <source>
        <dbReference type="HAMAP-Rule" id="MF_00038"/>
    </source>
</evidence>
<feature type="chain" id="PRO_0000332550" description="Phospho-N-acetylmuramoyl-pentapeptide-transferase">
    <location>
        <begin position="1"/>
        <end position="365"/>
    </location>
</feature>
<feature type="transmembrane region" description="Helical" evidence="1">
    <location>
        <begin position="15"/>
        <end position="35"/>
    </location>
</feature>
<feature type="transmembrane region" description="Helical" evidence="1">
    <location>
        <begin position="39"/>
        <end position="59"/>
    </location>
</feature>
<feature type="transmembrane region" description="Helical" evidence="1">
    <location>
        <begin position="84"/>
        <end position="104"/>
    </location>
</feature>
<feature type="transmembrane region" description="Helical" evidence="1">
    <location>
        <begin position="114"/>
        <end position="134"/>
    </location>
</feature>
<feature type="transmembrane region" description="Helical" evidence="1">
    <location>
        <begin position="156"/>
        <end position="176"/>
    </location>
</feature>
<feature type="transmembrane region" description="Helical" evidence="1">
    <location>
        <begin position="178"/>
        <end position="198"/>
    </location>
</feature>
<feature type="transmembrane region" description="Helical" evidence="1">
    <location>
        <begin position="209"/>
        <end position="229"/>
    </location>
</feature>
<feature type="transmembrane region" description="Helical" evidence="1">
    <location>
        <begin position="235"/>
        <end position="255"/>
    </location>
</feature>
<feature type="transmembrane region" description="Helical" evidence="1">
    <location>
        <begin position="263"/>
        <end position="283"/>
    </location>
</feature>
<feature type="transmembrane region" description="Helical" evidence="1">
    <location>
        <begin position="291"/>
        <end position="311"/>
    </location>
</feature>
<feature type="transmembrane region" description="Helical" evidence="1">
    <location>
        <begin position="343"/>
        <end position="363"/>
    </location>
</feature>
<dbReference type="EC" id="2.7.8.13" evidence="1"/>
<dbReference type="EMBL" id="CT971583">
    <property type="protein sequence ID" value="CAK24948.1"/>
    <property type="molecule type" value="Genomic_DNA"/>
</dbReference>
<dbReference type="SMR" id="A5GPT3"/>
<dbReference type="STRING" id="32051.SynWH7803_2522"/>
<dbReference type="KEGG" id="syx:SynWH7803_2522"/>
<dbReference type="eggNOG" id="COG0472">
    <property type="taxonomic scope" value="Bacteria"/>
</dbReference>
<dbReference type="HOGENOM" id="CLU_023982_0_2_3"/>
<dbReference type="OrthoDB" id="9805475at2"/>
<dbReference type="UniPathway" id="UPA00219"/>
<dbReference type="Proteomes" id="UP000001566">
    <property type="component" value="Chromosome"/>
</dbReference>
<dbReference type="GO" id="GO:0005886">
    <property type="term" value="C:plasma membrane"/>
    <property type="evidence" value="ECO:0007669"/>
    <property type="project" value="UniProtKB-SubCell"/>
</dbReference>
<dbReference type="GO" id="GO:0046872">
    <property type="term" value="F:metal ion binding"/>
    <property type="evidence" value="ECO:0007669"/>
    <property type="project" value="UniProtKB-KW"/>
</dbReference>
<dbReference type="GO" id="GO:0008963">
    <property type="term" value="F:phospho-N-acetylmuramoyl-pentapeptide-transferase activity"/>
    <property type="evidence" value="ECO:0007669"/>
    <property type="project" value="UniProtKB-UniRule"/>
</dbReference>
<dbReference type="GO" id="GO:0051992">
    <property type="term" value="F:UDP-N-acetylmuramoyl-L-alanyl-D-glutamyl-meso-2,6-diaminopimelyl-D-alanyl-D-alanine:undecaprenyl-phosphate transferase activity"/>
    <property type="evidence" value="ECO:0007669"/>
    <property type="project" value="RHEA"/>
</dbReference>
<dbReference type="GO" id="GO:0051301">
    <property type="term" value="P:cell division"/>
    <property type="evidence" value="ECO:0007669"/>
    <property type="project" value="UniProtKB-KW"/>
</dbReference>
<dbReference type="GO" id="GO:0071555">
    <property type="term" value="P:cell wall organization"/>
    <property type="evidence" value="ECO:0007669"/>
    <property type="project" value="UniProtKB-KW"/>
</dbReference>
<dbReference type="GO" id="GO:0009252">
    <property type="term" value="P:peptidoglycan biosynthetic process"/>
    <property type="evidence" value="ECO:0007669"/>
    <property type="project" value="UniProtKB-UniRule"/>
</dbReference>
<dbReference type="GO" id="GO:0008360">
    <property type="term" value="P:regulation of cell shape"/>
    <property type="evidence" value="ECO:0007669"/>
    <property type="project" value="UniProtKB-KW"/>
</dbReference>
<dbReference type="CDD" id="cd06852">
    <property type="entry name" value="GT_MraY"/>
    <property type="match status" value="1"/>
</dbReference>
<dbReference type="HAMAP" id="MF_00038">
    <property type="entry name" value="MraY"/>
    <property type="match status" value="1"/>
</dbReference>
<dbReference type="InterPro" id="IPR000715">
    <property type="entry name" value="Glycosyl_transferase_4"/>
</dbReference>
<dbReference type="InterPro" id="IPR003524">
    <property type="entry name" value="PNAcMuramoyl-5peptid_Trfase"/>
</dbReference>
<dbReference type="InterPro" id="IPR018480">
    <property type="entry name" value="PNAcMuramoyl-5peptid_Trfase_CS"/>
</dbReference>
<dbReference type="NCBIfam" id="TIGR00445">
    <property type="entry name" value="mraY"/>
    <property type="match status" value="1"/>
</dbReference>
<dbReference type="PANTHER" id="PTHR22926">
    <property type="entry name" value="PHOSPHO-N-ACETYLMURAMOYL-PENTAPEPTIDE-TRANSFERASE"/>
    <property type="match status" value="1"/>
</dbReference>
<dbReference type="PANTHER" id="PTHR22926:SF5">
    <property type="entry name" value="PHOSPHO-N-ACETYLMURAMOYL-PENTAPEPTIDE-TRANSFERASE HOMOLOG"/>
    <property type="match status" value="1"/>
</dbReference>
<dbReference type="Pfam" id="PF00953">
    <property type="entry name" value="Glycos_transf_4"/>
    <property type="match status" value="1"/>
</dbReference>
<dbReference type="Pfam" id="PF10555">
    <property type="entry name" value="MraY_sig1"/>
    <property type="match status" value="1"/>
</dbReference>
<dbReference type="PROSITE" id="PS01347">
    <property type="entry name" value="MRAY_1"/>
    <property type="match status" value="1"/>
</dbReference>
<dbReference type="PROSITE" id="PS01348">
    <property type="entry name" value="MRAY_2"/>
    <property type="match status" value="1"/>
</dbReference>